<proteinExistence type="inferred from homology"/>
<dbReference type="EC" id="1.18.1.2" evidence="1"/>
<dbReference type="EMBL" id="CP000667">
    <property type="protein sequence ID" value="ABP53348.1"/>
    <property type="molecule type" value="Genomic_DNA"/>
</dbReference>
<dbReference type="RefSeq" id="WP_011904782.1">
    <property type="nucleotide sequence ID" value="NC_009380.1"/>
</dbReference>
<dbReference type="SMR" id="A4X398"/>
<dbReference type="STRING" id="369723.Strop_0871"/>
<dbReference type="KEGG" id="stp:Strop_0871"/>
<dbReference type="PATRIC" id="fig|369723.5.peg.889"/>
<dbReference type="eggNOG" id="COG0492">
    <property type="taxonomic scope" value="Bacteria"/>
</dbReference>
<dbReference type="HOGENOM" id="CLU_031864_5_5_11"/>
<dbReference type="Proteomes" id="UP000000235">
    <property type="component" value="Chromosome"/>
</dbReference>
<dbReference type="GO" id="GO:0004324">
    <property type="term" value="F:ferredoxin-NADP+ reductase activity"/>
    <property type="evidence" value="ECO:0007669"/>
    <property type="project" value="UniProtKB-UniRule"/>
</dbReference>
<dbReference type="GO" id="GO:0050660">
    <property type="term" value="F:flavin adenine dinucleotide binding"/>
    <property type="evidence" value="ECO:0007669"/>
    <property type="project" value="UniProtKB-UniRule"/>
</dbReference>
<dbReference type="GO" id="GO:0050661">
    <property type="term" value="F:NADP binding"/>
    <property type="evidence" value="ECO:0007669"/>
    <property type="project" value="UniProtKB-UniRule"/>
</dbReference>
<dbReference type="Gene3D" id="3.50.50.60">
    <property type="entry name" value="FAD/NAD(P)-binding domain"/>
    <property type="match status" value="2"/>
</dbReference>
<dbReference type="HAMAP" id="MF_01685">
    <property type="entry name" value="FENR2"/>
    <property type="match status" value="1"/>
</dbReference>
<dbReference type="InterPro" id="IPR036188">
    <property type="entry name" value="FAD/NAD-bd_sf"/>
</dbReference>
<dbReference type="InterPro" id="IPR023753">
    <property type="entry name" value="FAD/NAD-binding_dom"/>
</dbReference>
<dbReference type="InterPro" id="IPR022890">
    <property type="entry name" value="Fd--NADP_Rdtase_type_2"/>
</dbReference>
<dbReference type="InterPro" id="IPR050097">
    <property type="entry name" value="Ferredoxin-NADP_redctase_2"/>
</dbReference>
<dbReference type="PANTHER" id="PTHR48105">
    <property type="entry name" value="THIOREDOXIN REDUCTASE 1-RELATED-RELATED"/>
    <property type="match status" value="1"/>
</dbReference>
<dbReference type="Pfam" id="PF07992">
    <property type="entry name" value="Pyr_redox_2"/>
    <property type="match status" value="1"/>
</dbReference>
<dbReference type="PRINTS" id="PR00368">
    <property type="entry name" value="FADPNR"/>
</dbReference>
<dbReference type="PRINTS" id="PR00469">
    <property type="entry name" value="PNDRDTASEII"/>
</dbReference>
<dbReference type="SUPFAM" id="SSF51905">
    <property type="entry name" value="FAD/NAD(P)-binding domain"/>
    <property type="match status" value="1"/>
</dbReference>
<name>FENR_SALTO</name>
<organism>
    <name type="scientific">Salinispora tropica (strain ATCC BAA-916 / DSM 44818 / JCM 13857 / NBRC 105044 / CNB-440)</name>
    <dbReference type="NCBI Taxonomy" id="369723"/>
    <lineage>
        <taxon>Bacteria</taxon>
        <taxon>Bacillati</taxon>
        <taxon>Actinomycetota</taxon>
        <taxon>Actinomycetes</taxon>
        <taxon>Micromonosporales</taxon>
        <taxon>Micromonosporaceae</taxon>
        <taxon>Salinispora</taxon>
    </lineage>
</organism>
<gene>
    <name type="ordered locus">Strop_0871</name>
</gene>
<sequence length="322" mass="33411">MHEVDIAVVGAGPAGLFAAYYAGFRGLSVAVVDALPEPGGQITAMYPEKLIHDVAGFPAIKGRDLVANLVAQAAPFAPRYLLGTRAEKLSYADGRPVLGLAGGEQLHCGAVVITGGLGSFTPRPLPVAERFVGTGIIYFVPQPADLTGQDVLIVGGGDSAFDWASTLQPLARSVTLVHRREKFRAHAATVARVHALPVRVVVNAEVTRLHGGGAVTGAEITVRGGAAELLPVDTVVAALGFTADLGPLAEWGLRLDRRHLVVDSTMATNLPRVFAAGDITEYQGKVRLIATGFGEAATAVNNAAVVLDPAAHLFPGHSSDET</sequence>
<protein>
    <recommendedName>
        <fullName evidence="1">Ferredoxin--NADP reductase</fullName>
        <shortName evidence="1">FNR</shortName>
        <shortName evidence="1">Fd-NADP(+) reductase</shortName>
        <ecNumber evidence="1">1.18.1.2</ecNumber>
    </recommendedName>
</protein>
<evidence type="ECO:0000255" key="1">
    <source>
        <dbReference type="HAMAP-Rule" id="MF_01685"/>
    </source>
</evidence>
<reference key="1">
    <citation type="journal article" date="2007" name="Proc. Natl. Acad. Sci. U.S.A.">
        <title>Genome sequencing reveals complex secondary metabolome in the marine actinomycete Salinispora tropica.</title>
        <authorList>
            <person name="Udwary D.W."/>
            <person name="Zeigler L."/>
            <person name="Asolkar R.N."/>
            <person name="Singan V."/>
            <person name="Lapidus A."/>
            <person name="Fenical W."/>
            <person name="Jensen P.R."/>
            <person name="Moore B.S."/>
        </authorList>
    </citation>
    <scope>NUCLEOTIDE SEQUENCE [LARGE SCALE GENOMIC DNA]</scope>
    <source>
        <strain>ATCC BAA-916 / DSM 44818 / JCM 13857 / NBRC 105044 / CNB-440</strain>
    </source>
</reference>
<keyword id="KW-0274">FAD</keyword>
<keyword id="KW-0285">Flavoprotein</keyword>
<keyword id="KW-0521">NADP</keyword>
<keyword id="KW-0560">Oxidoreductase</keyword>
<keyword id="KW-1185">Reference proteome</keyword>
<comment type="catalytic activity">
    <reaction evidence="1">
        <text>2 reduced [2Fe-2S]-[ferredoxin] + NADP(+) + H(+) = 2 oxidized [2Fe-2S]-[ferredoxin] + NADPH</text>
        <dbReference type="Rhea" id="RHEA:20125"/>
        <dbReference type="Rhea" id="RHEA-COMP:10000"/>
        <dbReference type="Rhea" id="RHEA-COMP:10001"/>
        <dbReference type="ChEBI" id="CHEBI:15378"/>
        <dbReference type="ChEBI" id="CHEBI:33737"/>
        <dbReference type="ChEBI" id="CHEBI:33738"/>
        <dbReference type="ChEBI" id="CHEBI:57783"/>
        <dbReference type="ChEBI" id="CHEBI:58349"/>
        <dbReference type="EC" id="1.18.1.2"/>
    </reaction>
</comment>
<comment type="cofactor">
    <cofactor evidence="1">
        <name>FAD</name>
        <dbReference type="ChEBI" id="CHEBI:57692"/>
    </cofactor>
    <text evidence="1">Binds 1 FAD per subunit.</text>
</comment>
<comment type="subunit">
    <text evidence="1">Homodimer.</text>
</comment>
<comment type="similarity">
    <text evidence="1">Belongs to the ferredoxin--NADP reductase type 2 family.</text>
</comment>
<accession>A4X398</accession>
<feature type="chain" id="PRO_0000364933" description="Ferredoxin--NADP reductase">
    <location>
        <begin position="1"/>
        <end position="322"/>
    </location>
</feature>
<feature type="binding site" evidence="1">
    <location>
        <position position="33"/>
    </location>
    <ligand>
        <name>FAD</name>
        <dbReference type="ChEBI" id="CHEBI:57692"/>
    </ligand>
</feature>
<feature type="binding site" evidence="1">
    <location>
        <position position="41"/>
    </location>
    <ligand>
        <name>FAD</name>
        <dbReference type="ChEBI" id="CHEBI:57692"/>
    </ligand>
</feature>
<feature type="binding site" evidence="1">
    <location>
        <position position="46"/>
    </location>
    <ligand>
        <name>FAD</name>
        <dbReference type="ChEBI" id="CHEBI:57692"/>
    </ligand>
</feature>
<feature type="binding site" evidence="1">
    <location>
        <position position="86"/>
    </location>
    <ligand>
        <name>FAD</name>
        <dbReference type="ChEBI" id="CHEBI:57692"/>
    </ligand>
</feature>
<feature type="binding site" evidence="1">
    <location>
        <position position="120"/>
    </location>
    <ligand>
        <name>FAD</name>
        <dbReference type="ChEBI" id="CHEBI:57692"/>
    </ligand>
</feature>
<feature type="binding site" evidence="1">
    <location>
        <position position="278"/>
    </location>
    <ligand>
        <name>FAD</name>
        <dbReference type="ChEBI" id="CHEBI:57692"/>
    </ligand>
</feature>
<feature type="binding site" evidence="1">
    <location>
        <position position="319"/>
    </location>
    <ligand>
        <name>FAD</name>
        <dbReference type="ChEBI" id="CHEBI:57692"/>
    </ligand>
</feature>